<accession>P96608</accession>
<accession>Q797L3</accession>
<dbReference type="EC" id="1.3.99.-"/>
<dbReference type="EMBL" id="AB001488">
    <property type="protein sequence ID" value="BAA19289.1"/>
    <property type="molecule type" value="Genomic_DNA"/>
</dbReference>
<dbReference type="EMBL" id="AL009126">
    <property type="protein sequence ID" value="CAB12259.1"/>
    <property type="molecule type" value="Genomic_DNA"/>
</dbReference>
<dbReference type="PIR" id="H69771">
    <property type="entry name" value="H69771"/>
</dbReference>
<dbReference type="RefSeq" id="NP_388333.1">
    <property type="nucleotide sequence ID" value="NC_000964.3"/>
</dbReference>
<dbReference type="RefSeq" id="WP_003234334.1">
    <property type="nucleotide sequence ID" value="NZ_OZ025638.1"/>
</dbReference>
<dbReference type="SMR" id="P96608"/>
<dbReference type="FunCoup" id="P96608">
    <property type="interactions" value="8"/>
</dbReference>
<dbReference type="STRING" id="224308.BSU04520"/>
<dbReference type="PaxDb" id="224308-BSU04520"/>
<dbReference type="EnsemblBacteria" id="CAB12259">
    <property type="protein sequence ID" value="CAB12259"/>
    <property type="gene ID" value="BSU_04520"/>
</dbReference>
<dbReference type="GeneID" id="939949"/>
<dbReference type="KEGG" id="bsu:BSU04520"/>
<dbReference type="PATRIC" id="fig|224308.179.peg.479"/>
<dbReference type="eggNOG" id="COG1960">
    <property type="taxonomic scope" value="Bacteria"/>
</dbReference>
<dbReference type="InParanoid" id="P96608"/>
<dbReference type="OrthoDB" id="9785203at2"/>
<dbReference type="PhylomeDB" id="P96608"/>
<dbReference type="BioCyc" id="BSUB:BSU04520-MONOMER"/>
<dbReference type="Proteomes" id="UP000001570">
    <property type="component" value="Chromosome"/>
</dbReference>
<dbReference type="GO" id="GO:0003995">
    <property type="term" value="F:acyl-CoA dehydrogenase activity"/>
    <property type="evidence" value="ECO:0000318"/>
    <property type="project" value="GO_Central"/>
</dbReference>
<dbReference type="GO" id="GO:0050660">
    <property type="term" value="F:flavin adenine dinucleotide binding"/>
    <property type="evidence" value="ECO:0007669"/>
    <property type="project" value="InterPro"/>
</dbReference>
<dbReference type="CDD" id="cd00567">
    <property type="entry name" value="ACAD"/>
    <property type="match status" value="1"/>
</dbReference>
<dbReference type="FunFam" id="2.40.110.10:FF:000020">
    <property type="entry name" value="Putative acyl-CoA dehydrogenase YdbM"/>
    <property type="match status" value="1"/>
</dbReference>
<dbReference type="Gene3D" id="1.10.540.10">
    <property type="entry name" value="Acyl-CoA dehydrogenase/oxidase, N-terminal domain"/>
    <property type="match status" value="1"/>
</dbReference>
<dbReference type="Gene3D" id="2.40.110.10">
    <property type="entry name" value="Butyryl-CoA Dehydrogenase, subunit A, domain 2"/>
    <property type="match status" value="1"/>
</dbReference>
<dbReference type="Gene3D" id="1.20.140.10">
    <property type="entry name" value="Butyryl-CoA Dehydrogenase, subunit A, domain 3"/>
    <property type="match status" value="1"/>
</dbReference>
<dbReference type="InterPro" id="IPR013107">
    <property type="entry name" value="Acyl-CoA_DH_C"/>
</dbReference>
<dbReference type="InterPro" id="IPR006091">
    <property type="entry name" value="Acyl-CoA_Oxase/DH_mid-dom"/>
</dbReference>
<dbReference type="InterPro" id="IPR046373">
    <property type="entry name" value="Acyl-CoA_Oxase/DH_mid-dom_sf"/>
</dbReference>
<dbReference type="InterPro" id="IPR036250">
    <property type="entry name" value="AcylCo_DH-like_C"/>
</dbReference>
<dbReference type="InterPro" id="IPR013786">
    <property type="entry name" value="AcylCoA_DH/ox_N"/>
</dbReference>
<dbReference type="InterPro" id="IPR037069">
    <property type="entry name" value="AcylCoA_DH/ox_N_sf"/>
</dbReference>
<dbReference type="InterPro" id="IPR009100">
    <property type="entry name" value="AcylCoA_DH/oxidase_NM_dom_sf"/>
</dbReference>
<dbReference type="PANTHER" id="PTHR43884">
    <property type="entry name" value="ACYL-COA DEHYDROGENASE"/>
    <property type="match status" value="1"/>
</dbReference>
<dbReference type="PANTHER" id="PTHR43884:SF25">
    <property type="entry name" value="ACYL-COA DEHYDROGENASE YDBM-RELATED"/>
    <property type="match status" value="1"/>
</dbReference>
<dbReference type="Pfam" id="PF08028">
    <property type="entry name" value="Acyl-CoA_dh_2"/>
    <property type="match status" value="1"/>
</dbReference>
<dbReference type="Pfam" id="PF02770">
    <property type="entry name" value="Acyl-CoA_dh_M"/>
    <property type="match status" value="1"/>
</dbReference>
<dbReference type="Pfam" id="PF02771">
    <property type="entry name" value="Acyl-CoA_dh_N"/>
    <property type="match status" value="1"/>
</dbReference>
<dbReference type="PIRSF" id="PIRSF016578">
    <property type="entry name" value="HsaA"/>
    <property type="match status" value="1"/>
</dbReference>
<dbReference type="SUPFAM" id="SSF47203">
    <property type="entry name" value="Acyl-CoA dehydrogenase C-terminal domain-like"/>
    <property type="match status" value="1"/>
</dbReference>
<dbReference type="SUPFAM" id="SSF56645">
    <property type="entry name" value="Acyl-CoA dehydrogenase NM domain-like"/>
    <property type="match status" value="1"/>
</dbReference>
<organism>
    <name type="scientific">Bacillus subtilis (strain 168)</name>
    <dbReference type="NCBI Taxonomy" id="224308"/>
    <lineage>
        <taxon>Bacteria</taxon>
        <taxon>Bacillati</taxon>
        <taxon>Bacillota</taxon>
        <taxon>Bacilli</taxon>
        <taxon>Bacillales</taxon>
        <taxon>Bacillaceae</taxon>
        <taxon>Bacillus</taxon>
    </lineage>
</organism>
<proteinExistence type="evidence at transcript level"/>
<keyword id="KW-0274">FAD</keyword>
<keyword id="KW-0285">Flavoprotein</keyword>
<keyword id="KW-0560">Oxidoreductase</keyword>
<keyword id="KW-1185">Reference proteome</keyword>
<sequence>MSLFIQNDQQRQWMEKIGRIADEFQQTAAEDDEQGRFPAEKIQKLRDAGYTALTLPASHGGGGISVYDMLLFQERLARGDAPTALSIGWHLSVIGELGEGNSWDEDVFAFVAKEVQNGAVINRAATEAKTGSPTRGGRPGTHAVKKDGKWAVNGRKTFTTMSQALDYFLVTAWIEDKQTTGVFLIHKDDPGLSIEETWDMMAMRATGSHDLVLNEVMLDENKLVELLQGPRGAKPNGWLLHIPAIYLGVAQAARDYAVQFASEYSPNSLNGPIKNVPAVQQRTGEMELELLNARHFLFHIAQLYDDPVRRPHLTSELGAAKHIVTNAALSVVDKAMRIVGAKSLERTNPLQRYYRDVRAGLHNPPMDDAVIHKLAAEAFES</sequence>
<feature type="chain" id="PRO_0000360817" description="Putative acyl-CoA dehydrogenase YdbM">
    <location>
        <begin position="1"/>
        <end position="381"/>
    </location>
</feature>
<feature type="binding site" evidence="2">
    <location>
        <begin position="158"/>
        <end position="160"/>
    </location>
    <ligand>
        <name>FAD</name>
        <dbReference type="ChEBI" id="CHEBI:57692"/>
    </ligand>
</feature>
<feature type="binding site" evidence="2">
    <location>
        <begin position="337"/>
        <end position="341"/>
    </location>
    <ligand>
        <name>FAD</name>
        <dbReference type="ChEBI" id="CHEBI:57692"/>
    </ligand>
</feature>
<gene>
    <name type="primary">ydbM</name>
    <name type="ordered locus">BSU04520</name>
</gene>
<comment type="cofactor">
    <cofactor evidence="1">
        <name>FAD</name>
        <dbReference type="ChEBI" id="CHEBI:57692"/>
    </cofactor>
</comment>
<comment type="induction">
    <text evidence="3">Induced by methionine. Repressed by sulfate via the cysteine metabolism repressor YrzC/CymR.</text>
</comment>
<comment type="similarity">
    <text evidence="4">Belongs to the acyl-CoA dehydrogenase family.</text>
</comment>
<evidence type="ECO:0000250" key="1"/>
<evidence type="ECO:0000255" key="2"/>
<evidence type="ECO:0000269" key="3">
    <source>
    </source>
</evidence>
<evidence type="ECO:0000305" key="4"/>
<reference key="1">
    <citation type="submission" date="1997-03" db="EMBL/GenBank/DDBJ databases">
        <title>A 148 kbp sequence of the region between 35 and 47 degree of the Bacillus subtilis genome.</title>
        <authorList>
            <person name="Kasahara Y."/>
            <person name="Nakai S."/>
            <person name="Lee S."/>
            <person name="Sadaie Y."/>
            <person name="Ogasawara N."/>
        </authorList>
    </citation>
    <scope>NUCLEOTIDE SEQUENCE [GENOMIC DNA]</scope>
    <source>
        <strain>168</strain>
    </source>
</reference>
<reference key="2">
    <citation type="journal article" date="1997" name="Nature">
        <title>The complete genome sequence of the Gram-positive bacterium Bacillus subtilis.</title>
        <authorList>
            <person name="Kunst F."/>
            <person name="Ogasawara N."/>
            <person name="Moszer I."/>
            <person name="Albertini A.M."/>
            <person name="Alloni G."/>
            <person name="Azevedo V."/>
            <person name="Bertero M.G."/>
            <person name="Bessieres P."/>
            <person name="Bolotin A."/>
            <person name="Borchert S."/>
            <person name="Borriss R."/>
            <person name="Boursier L."/>
            <person name="Brans A."/>
            <person name="Braun M."/>
            <person name="Brignell S.C."/>
            <person name="Bron S."/>
            <person name="Brouillet S."/>
            <person name="Bruschi C.V."/>
            <person name="Caldwell B."/>
            <person name="Capuano V."/>
            <person name="Carter N.M."/>
            <person name="Choi S.-K."/>
            <person name="Codani J.-J."/>
            <person name="Connerton I.F."/>
            <person name="Cummings N.J."/>
            <person name="Daniel R.A."/>
            <person name="Denizot F."/>
            <person name="Devine K.M."/>
            <person name="Duesterhoeft A."/>
            <person name="Ehrlich S.D."/>
            <person name="Emmerson P.T."/>
            <person name="Entian K.-D."/>
            <person name="Errington J."/>
            <person name="Fabret C."/>
            <person name="Ferrari E."/>
            <person name="Foulger D."/>
            <person name="Fritz C."/>
            <person name="Fujita M."/>
            <person name="Fujita Y."/>
            <person name="Fuma S."/>
            <person name="Galizzi A."/>
            <person name="Galleron N."/>
            <person name="Ghim S.-Y."/>
            <person name="Glaser P."/>
            <person name="Goffeau A."/>
            <person name="Golightly E.J."/>
            <person name="Grandi G."/>
            <person name="Guiseppi G."/>
            <person name="Guy B.J."/>
            <person name="Haga K."/>
            <person name="Haiech J."/>
            <person name="Harwood C.R."/>
            <person name="Henaut A."/>
            <person name="Hilbert H."/>
            <person name="Holsappel S."/>
            <person name="Hosono S."/>
            <person name="Hullo M.-F."/>
            <person name="Itaya M."/>
            <person name="Jones L.-M."/>
            <person name="Joris B."/>
            <person name="Karamata D."/>
            <person name="Kasahara Y."/>
            <person name="Klaerr-Blanchard M."/>
            <person name="Klein C."/>
            <person name="Kobayashi Y."/>
            <person name="Koetter P."/>
            <person name="Koningstein G."/>
            <person name="Krogh S."/>
            <person name="Kumano M."/>
            <person name="Kurita K."/>
            <person name="Lapidus A."/>
            <person name="Lardinois S."/>
            <person name="Lauber J."/>
            <person name="Lazarevic V."/>
            <person name="Lee S.-M."/>
            <person name="Levine A."/>
            <person name="Liu H."/>
            <person name="Masuda S."/>
            <person name="Mauel C."/>
            <person name="Medigue C."/>
            <person name="Medina N."/>
            <person name="Mellado R.P."/>
            <person name="Mizuno M."/>
            <person name="Moestl D."/>
            <person name="Nakai S."/>
            <person name="Noback M."/>
            <person name="Noone D."/>
            <person name="O'Reilly M."/>
            <person name="Ogawa K."/>
            <person name="Ogiwara A."/>
            <person name="Oudega B."/>
            <person name="Park S.-H."/>
            <person name="Parro V."/>
            <person name="Pohl T.M."/>
            <person name="Portetelle D."/>
            <person name="Porwollik S."/>
            <person name="Prescott A.M."/>
            <person name="Presecan E."/>
            <person name="Pujic P."/>
            <person name="Purnelle B."/>
            <person name="Rapoport G."/>
            <person name="Rey M."/>
            <person name="Reynolds S."/>
            <person name="Rieger M."/>
            <person name="Rivolta C."/>
            <person name="Rocha E."/>
            <person name="Roche B."/>
            <person name="Rose M."/>
            <person name="Sadaie Y."/>
            <person name="Sato T."/>
            <person name="Scanlan E."/>
            <person name="Schleich S."/>
            <person name="Schroeter R."/>
            <person name="Scoffone F."/>
            <person name="Sekiguchi J."/>
            <person name="Sekowska A."/>
            <person name="Seror S.J."/>
            <person name="Serror P."/>
            <person name="Shin B.-S."/>
            <person name="Soldo B."/>
            <person name="Sorokin A."/>
            <person name="Tacconi E."/>
            <person name="Takagi T."/>
            <person name="Takahashi H."/>
            <person name="Takemaru K."/>
            <person name="Takeuchi M."/>
            <person name="Tamakoshi A."/>
            <person name="Tanaka T."/>
            <person name="Terpstra P."/>
            <person name="Tognoni A."/>
            <person name="Tosato V."/>
            <person name="Uchiyama S."/>
            <person name="Vandenbol M."/>
            <person name="Vannier F."/>
            <person name="Vassarotti A."/>
            <person name="Viari A."/>
            <person name="Wambutt R."/>
            <person name="Wedler E."/>
            <person name="Wedler H."/>
            <person name="Weitzenegger T."/>
            <person name="Winters P."/>
            <person name="Wipat A."/>
            <person name="Yamamoto H."/>
            <person name="Yamane K."/>
            <person name="Yasumoto K."/>
            <person name="Yata K."/>
            <person name="Yoshida K."/>
            <person name="Yoshikawa H.-F."/>
            <person name="Zumstein E."/>
            <person name="Yoshikawa H."/>
            <person name="Danchin A."/>
        </authorList>
    </citation>
    <scope>NUCLEOTIDE SEQUENCE [LARGE SCALE GENOMIC DNA]</scope>
    <source>
        <strain>168</strain>
    </source>
</reference>
<reference key="3">
    <citation type="journal article" date="2006" name="J. Bacteriol.">
        <title>Global control of cysteine metabolism by CymR in Bacillus subtilis.</title>
        <authorList>
            <person name="Even S."/>
            <person name="Burguiere P."/>
            <person name="Auger S."/>
            <person name="Soutourina O."/>
            <person name="Danchin A."/>
            <person name="Martin-Verstraete I."/>
        </authorList>
    </citation>
    <scope>INDUCTION</scope>
</reference>
<name>YDBM_BACSU</name>
<protein>
    <recommendedName>
        <fullName>Putative acyl-CoA dehydrogenase YdbM</fullName>
        <ecNumber>1.3.99.-</ecNumber>
    </recommendedName>
</protein>